<sequence>MHKLTPDEAIDIAYDIFLEMAGEHLEPADILLFNLQFEERGAVEMVETSDRWEEEIGTLIDPTAFAEVWVGLVNDKDEMDDVFARFLISHQAENREYHVIWKE</sequence>
<comment type="function">
    <text evidence="1">May act as a double-stranded DNA (dsDNA) mimic. Probably regulates the activity of a dsDNA-binding protein.</text>
</comment>
<comment type="similarity">
    <text evidence="1">Belongs to the putative dsDNA mimic protein family.</text>
</comment>
<proteinExistence type="inferred from homology"/>
<name>Y986_HAEDU</name>
<keyword id="KW-1185">Reference proteome</keyword>
<reference key="1">
    <citation type="submission" date="2003-06" db="EMBL/GenBank/DDBJ databases">
        <title>The complete genome sequence of Haemophilus ducreyi.</title>
        <authorList>
            <person name="Munson R.S. Jr."/>
            <person name="Ray W.C."/>
            <person name="Mahairas G."/>
            <person name="Sabo P."/>
            <person name="Mungur R."/>
            <person name="Johnson L."/>
            <person name="Nguyen D."/>
            <person name="Wang J."/>
            <person name="Forst C."/>
            <person name="Hood L."/>
        </authorList>
    </citation>
    <scope>NUCLEOTIDE SEQUENCE [LARGE SCALE GENOMIC DNA]</scope>
    <source>
        <strain>35000HP / ATCC 700724</strain>
    </source>
</reference>
<dbReference type="EMBL" id="AE017143">
    <property type="protein sequence ID" value="AAP95865.1"/>
    <property type="molecule type" value="Genomic_DNA"/>
</dbReference>
<dbReference type="RefSeq" id="WP_010944915.1">
    <property type="nucleotide sequence ID" value="NC_002940.2"/>
</dbReference>
<dbReference type="SMR" id="Q7VMJ1"/>
<dbReference type="STRING" id="233412.HD_0986"/>
<dbReference type="GeneID" id="60732966"/>
<dbReference type="KEGG" id="hdu:HD_0986"/>
<dbReference type="eggNOG" id="COG3099">
    <property type="taxonomic scope" value="Bacteria"/>
</dbReference>
<dbReference type="HOGENOM" id="CLU_143392_0_0_6"/>
<dbReference type="OrthoDB" id="5677388at2"/>
<dbReference type="Proteomes" id="UP000001022">
    <property type="component" value="Chromosome"/>
</dbReference>
<dbReference type="Gene3D" id="3.10.450.140">
    <property type="entry name" value="dsDNA mimic, putative"/>
    <property type="match status" value="1"/>
</dbReference>
<dbReference type="HAMAP" id="MF_00680">
    <property type="entry name" value="Put_dsDNA_mimic"/>
    <property type="match status" value="1"/>
</dbReference>
<dbReference type="InterPro" id="IPR007376">
    <property type="entry name" value="dsDNA_mimic_put"/>
</dbReference>
<dbReference type="InterPro" id="IPR036763">
    <property type="entry name" value="Put_dsDNA_mimic_sf"/>
</dbReference>
<dbReference type="NCBIfam" id="NF003469">
    <property type="entry name" value="PRK05094.1"/>
    <property type="match status" value="1"/>
</dbReference>
<dbReference type="Pfam" id="PF04269">
    <property type="entry name" value="DUF440"/>
    <property type="match status" value="1"/>
</dbReference>
<dbReference type="PIRSF" id="PIRSF004916">
    <property type="entry name" value="UCP004916"/>
    <property type="match status" value="1"/>
</dbReference>
<dbReference type="SUPFAM" id="SSF102816">
    <property type="entry name" value="Putative dsDNA mimic"/>
    <property type="match status" value="1"/>
</dbReference>
<accession>Q7VMJ1</accession>
<organism>
    <name type="scientific">Haemophilus ducreyi (strain 35000HP / ATCC 700724)</name>
    <dbReference type="NCBI Taxonomy" id="233412"/>
    <lineage>
        <taxon>Bacteria</taxon>
        <taxon>Pseudomonadati</taxon>
        <taxon>Pseudomonadota</taxon>
        <taxon>Gammaproteobacteria</taxon>
        <taxon>Pasteurellales</taxon>
        <taxon>Pasteurellaceae</taxon>
        <taxon>Haemophilus</taxon>
    </lineage>
</organism>
<protein>
    <recommendedName>
        <fullName evidence="1">Putative double-stranded DNA mimic protein HD_0986</fullName>
    </recommendedName>
</protein>
<gene>
    <name type="ordered locus">HD_0986</name>
</gene>
<evidence type="ECO:0000255" key="1">
    <source>
        <dbReference type="HAMAP-Rule" id="MF_00680"/>
    </source>
</evidence>
<feature type="chain" id="PRO_0000072778" description="Putative double-stranded DNA mimic protein HD_0986">
    <location>
        <begin position="1"/>
        <end position="103"/>
    </location>
</feature>